<comment type="function">
    <text evidence="1">The actual biological function of YdiB remains unclear, nor is it known whether 3-dehydroshikimate or quinate represents the natural substrate. Catalyzes the reversible NAD-dependent reduction of both 3-dehydroshikimate (DHSA) and 3-dehydroquinate to yield shikimate (SA) and quinate, respectively. It can use both NAD or NADP for catalysis, however it has higher catalytic efficiency with NAD.</text>
</comment>
<comment type="catalytic activity">
    <reaction evidence="1">
        <text>L-quinate + NAD(+) = 3-dehydroquinate + NADH + H(+)</text>
        <dbReference type="Rhea" id="RHEA:22364"/>
        <dbReference type="ChEBI" id="CHEBI:15378"/>
        <dbReference type="ChEBI" id="CHEBI:29751"/>
        <dbReference type="ChEBI" id="CHEBI:32364"/>
        <dbReference type="ChEBI" id="CHEBI:57540"/>
        <dbReference type="ChEBI" id="CHEBI:57945"/>
        <dbReference type="EC" id="1.1.1.282"/>
    </reaction>
</comment>
<comment type="catalytic activity">
    <reaction evidence="1">
        <text>L-quinate + NADP(+) = 3-dehydroquinate + NADPH + H(+)</text>
        <dbReference type="Rhea" id="RHEA:18425"/>
        <dbReference type="ChEBI" id="CHEBI:15378"/>
        <dbReference type="ChEBI" id="CHEBI:29751"/>
        <dbReference type="ChEBI" id="CHEBI:32364"/>
        <dbReference type="ChEBI" id="CHEBI:57783"/>
        <dbReference type="ChEBI" id="CHEBI:58349"/>
        <dbReference type="EC" id="1.1.1.282"/>
    </reaction>
</comment>
<comment type="catalytic activity">
    <reaction evidence="1">
        <text>shikimate + NADP(+) = 3-dehydroshikimate + NADPH + H(+)</text>
        <dbReference type="Rhea" id="RHEA:17737"/>
        <dbReference type="ChEBI" id="CHEBI:15378"/>
        <dbReference type="ChEBI" id="CHEBI:16630"/>
        <dbReference type="ChEBI" id="CHEBI:36208"/>
        <dbReference type="ChEBI" id="CHEBI:57783"/>
        <dbReference type="ChEBI" id="CHEBI:58349"/>
        <dbReference type="EC" id="1.1.1.282"/>
    </reaction>
</comment>
<comment type="catalytic activity">
    <reaction evidence="1">
        <text>shikimate + NAD(+) = 3-dehydroshikimate + NADH + H(+)</text>
        <dbReference type="Rhea" id="RHEA:17741"/>
        <dbReference type="ChEBI" id="CHEBI:15378"/>
        <dbReference type="ChEBI" id="CHEBI:16630"/>
        <dbReference type="ChEBI" id="CHEBI:36208"/>
        <dbReference type="ChEBI" id="CHEBI:57540"/>
        <dbReference type="ChEBI" id="CHEBI:57945"/>
        <dbReference type="EC" id="1.1.1.282"/>
    </reaction>
</comment>
<comment type="pathway">
    <text evidence="1">Metabolic intermediate biosynthesis; chorismate biosynthesis; chorismate from D-erythrose 4-phosphate and phosphoenolpyruvate: step 4/7.</text>
</comment>
<comment type="subunit">
    <text evidence="1">Homodimer.</text>
</comment>
<comment type="similarity">
    <text evidence="1">Belongs to the shikimate dehydrogenase family.</text>
</comment>
<gene>
    <name evidence="1" type="primary">ydiB</name>
    <name type="ordered locus">SeSA_A1455</name>
</gene>
<sequence>MDVTAKYELIGLMAYPIRHSLSPEMQNKALEKAGLPYTYMAFEVDNTTFASAIEGLKALKMRGTGVSMPNKQLACEYVDELTPAAKLVGAINTIVNDDGYLRGYNTDGTGHIRAIKESGFDIRGKTMVLLGAGGAATAIGAQAAIEGIKEIKLFNRKDDFFEKAVAFAKRVNENTDCVVTVTDLADQHAFTEALASADILTNGTKVGMKPLENESLIGDVSLLRPELLVTECVYNPHMTKLLQQAQQAGCKTIDGYGMLLWQGAEQFELWTGKAFPLDYVKQVMGFTA</sequence>
<accession>B4TUS3</accession>
<reference key="1">
    <citation type="journal article" date="2011" name="J. Bacteriol.">
        <title>Comparative genomics of 28 Salmonella enterica isolates: evidence for CRISPR-mediated adaptive sublineage evolution.</title>
        <authorList>
            <person name="Fricke W.F."/>
            <person name="Mammel M.K."/>
            <person name="McDermott P.F."/>
            <person name="Tartera C."/>
            <person name="White D.G."/>
            <person name="Leclerc J.E."/>
            <person name="Ravel J."/>
            <person name="Cebula T.A."/>
        </authorList>
    </citation>
    <scope>NUCLEOTIDE SEQUENCE [LARGE SCALE GENOMIC DNA]</scope>
    <source>
        <strain>CVM19633</strain>
    </source>
</reference>
<keyword id="KW-0028">Amino-acid biosynthesis</keyword>
<keyword id="KW-0057">Aromatic amino acid biosynthesis</keyword>
<keyword id="KW-0520">NAD</keyword>
<keyword id="KW-0521">NADP</keyword>
<keyword id="KW-0560">Oxidoreductase</keyword>
<feature type="chain" id="PRO_1000147561" description="Quinate/shikimate dehydrogenase">
    <location>
        <begin position="1"/>
        <end position="288"/>
    </location>
</feature>
<feature type="binding site" evidence="1">
    <location>
        <position position="71"/>
    </location>
    <ligand>
        <name>substrate</name>
    </ligand>
</feature>
<feature type="binding site" evidence="1">
    <location>
        <position position="107"/>
    </location>
    <ligand>
        <name>substrate</name>
    </ligand>
</feature>
<feature type="binding site" evidence="1">
    <location>
        <begin position="132"/>
        <end position="135"/>
    </location>
    <ligand>
        <name>NAD(+)</name>
        <dbReference type="ChEBI" id="CHEBI:57540"/>
    </ligand>
</feature>
<feature type="binding site" evidence="1">
    <location>
        <begin position="155"/>
        <end position="158"/>
    </location>
    <ligand>
        <name>NAD(+)</name>
        <dbReference type="ChEBI" id="CHEBI:57540"/>
    </ligand>
</feature>
<feature type="binding site" evidence="1">
    <location>
        <position position="205"/>
    </location>
    <ligand>
        <name>NAD(+)</name>
        <dbReference type="ChEBI" id="CHEBI:57540"/>
    </ligand>
</feature>
<feature type="binding site" evidence="1">
    <location>
        <begin position="232"/>
        <end position="235"/>
    </location>
    <ligand>
        <name>NAD(+)</name>
        <dbReference type="ChEBI" id="CHEBI:57540"/>
    </ligand>
</feature>
<feature type="binding site" evidence="1">
    <location>
        <position position="255"/>
    </location>
    <ligand>
        <name>NAD(+)</name>
        <dbReference type="ChEBI" id="CHEBI:57540"/>
    </ligand>
</feature>
<name>YDIB_SALSV</name>
<organism>
    <name type="scientific">Salmonella schwarzengrund (strain CVM19633)</name>
    <dbReference type="NCBI Taxonomy" id="439843"/>
    <lineage>
        <taxon>Bacteria</taxon>
        <taxon>Pseudomonadati</taxon>
        <taxon>Pseudomonadota</taxon>
        <taxon>Gammaproteobacteria</taxon>
        <taxon>Enterobacterales</taxon>
        <taxon>Enterobacteriaceae</taxon>
        <taxon>Salmonella</taxon>
    </lineage>
</organism>
<protein>
    <recommendedName>
        <fullName evidence="1">Quinate/shikimate dehydrogenase</fullName>
        <ecNumber evidence="1">1.1.1.282</ecNumber>
    </recommendedName>
    <alternativeName>
        <fullName evidence="1">NAD-dependent shikimate 5-dehydrogenase</fullName>
    </alternativeName>
</protein>
<evidence type="ECO:0000255" key="1">
    <source>
        <dbReference type="HAMAP-Rule" id="MF_01578"/>
    </source>
</evidence>
<dbReference type="EC" id="1.1.1.282" evidence="1"/>
<dbReference type="EMBL" id="CP001127">
    <property type="protein sequence ID" value="ACF91472.1"/>
    <property type="molecule type" value="Genomic_DNA"/>
</dbReference>
<dbReference type="RefSeq" id="WP_000383488.1">
    <property type="nucleotide sequence ID" value="NC_011094.1"/>
</dbReference>
<dbReference type="SMR" id="B4TUS3"/>
<dbReference type="KEGG" id="sew:SeSA_A1455"/>
<dbReference type="HOGENOM" id="CLU_044063_4_4_6"/>
<dbReference type="UniPathway" id="UPA00053">
    <property type="reaction ID" value="UER00087"/>
</dbReference>
<dbReference type="Proteomes" id="UP000001865">
    <property type="component" value="Chromosome"/>
</dbReference>
<dbReference type="GO" id="GO:0030266">
    <property type="term" value="F:quinate 3-dehydrogenase (NAD+) activity"/>
    <property type="evidence" value="ECO:0007669"/>
    <property type="project" value="UniProtKB-UniRule"/>
</dbReference>
<dbReference type="GO" id="GO:0052733">
    <property type="term" value="F:quinate 3-dehydrogenase (NADP+) activity"/>
    <property type="evidence" value="ECO:0007669"/>
    <property type="project" value="InterPro"/>
</dbReference>
<dbReference type="GO" id="GO:0052734">
    <property type="term" value="F:shikimate 3-dehydrogenase (NAD+) activity"/>
    <property type="evidence" value="ECO:0007669"/>
    <property type="project" value="InterPro"/>
</dbReference>
<dbReference type="GO" id="GO:0004764">
    <property type="term" value="F:shikimate 3-dehydrogenase (NADP+) activity"/>
    <property type="evidence" value="ECO:0007669"/>
    <property type="project" value="UniProtKB-UniRule"/>
</dbReference>
<dbReference type="GO" id="GO:0008652">
    <property type="term" value="P:amino acid biosynthetic process"/>
    <property type="evidence" value="ECO:0007669"/>
    <property type="project" value="UniProtKB-KW"/>
</dbReference>
<dbReference type="GO" id="GO:0009073">
    <property type="term" value="P:aromatic amino acid family biosynthetic process"/>
    <property type="evidence" value="ECO:0007669"/>
    <property type="project" value="UniProtKB-KW"/>
</dbReference>
<dbReference type="GO" id="GO:0009423">
    <property type="term" value="P:chorismate biosynthetic process"/>
    <property type="evidence" value="ECO:0007669"/>
    <property type="project" value="UniProtKB-UniRule"/>
</dbReference>
<dbReference type="GO" id="GO:0019632">
    <property type="term" value="P:shikimate metabolic process"/>
    <property type="evidence" value="ECO:0007669"/>
    <property type="project" value="TreeGrafter"/>
</dbReference>
<dbReference type="CDD" id="cd01065">
    <property type="entry name" value="NAD_bind_Shikimate_DH"/>
    <property type="match status" value="1"/>
</dbReference>
<dbReference type="FunFam" id="3.40.50.10860:FF:000004">
    <property type="entry name" value="Quinate/shikimate dehydrogenase"/>
    <property type="match status" value="1"/>
</dbReference>
<dbReference type="FunFam" id="3.40.50.720:FF:000086">
    <property type="entry name" value="Quinate/shikimate dehydrogenase"/>
    <property type="match status" value="1"/>
</dbReference>
<dbReference type="Gene3D" id="3.40.50.10860">
    <property type="entry name" value="Leucine Dehydrogenase, chain A, domain 1"/>
    <property type="match status" value="1"/>
</dbReference>
<dbReference type="Gene3D" id="3.40.50.720">
    <property type="entry name" value="NAD(P)-binding Rossmann-like Domain"/>
    <property type="match status" value="1"/>
</dbReference>
<dbReference type="HAMAP" id="MF_00222">
    <property type="entry name" value="Shikimate_DH_AroE"/>
    <property type="match status" value="1"/>
</dbReference>
<dbReference type="HAMAP" id="MF_01578">
    <property type="entry name" value="Shikimate_DH_YdiB"/>
    <property type="match status" value="1"/>
</dbReference>
<dbReference type="InterPro" id="IPR046346">
    <property type="entry name" value="Aminoacid_DH-like_N_sf"/>
</dbReference>
<dbReference type="InterPro" id="IPR036291">
    <property type="entry name" value="NAD(P)-bd_dom_sf"/>
</dbReference>
<dbReference type="InterPro" id="IPR022872">
    <property type="entry name" value="Quinate/Shikimate_DH"/>
</dbReference>
<dbReference type="InterPro" id="IPR041121">
    <property type="entry name" value="SDH_C"/>
</dbReference>
<dbReference type="InterPro" id="IPR013708">
    <property type="entry name" value="Shikimate_DH-bd_N"/>
</dbReference>
<dbReference type="InterPro" id="IPR022893">
    <property type="entry name" value="Shikimate_DH_fam"/>
</dbReference>
<dbReference type="NCBIfam" id="NF009390">
    <property type="entry name" value="PRK12749.1"/>
    <property type="match status" value="1"/>
</dbReference>
<dbReference type="PANTHER" id="PTHR21089:SF1">
    <property type="entry name" value="BIFUNCTIONAL 3-DEHYDROQUINATE DEHYDRATASE_SHIKIMATE DEHYDROGENASE, CHLOROPLASTIC"/>
    <property type="match status" value="1"/>
</dbReference>
<dbReference type="PANTHER" id="PTHR21089">
    <property type="entry name" value="SHIKIMATE DEHYDROGENASE"/>
    <property type="match status" value="1"/>
</dbReference>
<dbReference type="Pfam" id="PF18317">
    <property type="entry name" value="SDH_C"/>
    <property type="match status" value="1"/>
</dbReference>
<dbReference type="Pfam" id="PF08501">
    <property type="entry name" value="Shikimate_dh_N"/>
    <property type="match status" value="1"/>
</dbReference>
<dbReference type="SUPFAM" id="SSF53223">
    <property type="entry name" value="Aminoacid dehydrogenase-like, N-terminal domain"/>
    <property type="match status" value="1"/>
</dbReference>
<dbReference type="SUPFAM" id="SSF51735">
    <property type="entry name" value="NAD(P)-binding Rossmann-fold domains"/>
    <property type="match status" value="1"/>
</dbReference>
<proteinExistence type="inferred from homology"/>